<accession>Q91739</accession>
<accession>P79924</accession>
<accession>Q05042</accession>
<organism>
    <name type="scientific">Xenopus laevis</name>
    <name type="common">African clawed frog</name>
    <dbReference type="NCBI Taxonomy" id="8355"/>
    <lineage>
        <taxon>Eukaryota</taxon>
        <taxon>Metazoa</taxon>
        <taxon>Chordata</taxon>
        <taxon>Craniata</taxon>
        <taxon>Vertebrata</taxon>
        <taxon>Euteleostomi</taxon>
        <taxon>Amphibia</taxon>
        <taxon>Batrachia</taxon>
        <taxon>Anura</taxon>
        <taxon>Pipoidea</taxon>
        <taxon>Pipidae</taxon>
        <taxon>Xenopodinae</taxon>
        <taxon>Xenopus</taxon>
        <taxon>Xenopus</taxon>
    </lineage>
</organism>
<gene>
    <name type="primary">hnf1a-b</name>
    <name type="synonym">hnf1-b</name>
    <name type="synonym">lfb1b</name>
    <name type="synonym">tcf1-b</name>
</gene>
<comment type="function">
    <text evidence="1 7">Transcriptional activator that regulates the tissue specific expression of multiple genes, especially in pancreas and liver (By similarity). Binds to the hepatocyte specific promoter element HP1. Binds to the inverted palindrome 5'-GTTAATNATTAAC-3'.</text>
</comment>
<comment type="subunit">
    <text>Binds DNA as dimer. Forms a homodimer or heterodimer with HNF1-alpha-A. Potentially also form a heterodimer with HNF1-beta.</text>
</comment>
<comment type="subcellular location">
    <subcellularLocation>
        <location>Nucleus</location>
    </subcellularLocation>
</comment>
<comment type="tissue specificity">
    <text>Liver.</text>
</comment>
<comment type="similarity">
    <text evidence="8">Belongs to the HNF1 homeobox family.</text>
</comment>
<name>HNFAB_XENLA</name>
<proteinExistence type="evidence at transcript level"/>
<keyword id="KW-0010">Activator</keyword>
<keyword id="KW-0238">DNA-binding</keyword>
<keyword id="KW-0371">Homeobox</keyword>
<keyword id="KW-0539">Nucleus</keyword>
<keyword id="KW-1185">Reference proteome</keyword>
<keyword id="KW-0804">Transcription</keyword>
<keyword id="KW-0805">Transcription regulation</keyword>
<evidence type="ECO:0000250" key="1"/>
<evidence type="ECO:0000255" key="2"/>
<evidence type="ECO:0000255" key="3">
    <source>
        <dbReference type="PROSITE-ProRule" id="PRU00108"/>
    </source>
</evidence>
<evidence type="ECO:0000255" key="4">
    <source>
        <dbReference type="PROSITE-ProRule" id="PRU01285"/>
    </source>
</evidence>
<evidence type="ECO:0000255" key="5">
    <source>
        <dbReference type="PROSITE-ProRule" id="PRU01286"/>
    </source>
</evidence>
<evidence type="ECO:0000256" key="6">
    <source>
        <dbReference type="SAM" id="MobiDB-lite"/>
    </source>
</evidence>
<evidence type="ECO:0000269" key="7">
    <source>
    </source>
</evidence>
<evidence type="ECO:0000305" key="8"/>
<reference key="1">
    <citation type="journal article" date="1993" name="Gene">
        <title>Genomic structure of the Xenopus laevis liver transcription factor LFB1.</title>
        <authorList>
            <person name="Zapp D."/>
            <person name="Bartkowski S."/>
            <person name="Zoidl C."/>
            <person name="Klein-Hitpass L."/>
            <person name="Ryffel G.U."/>
        </authorList>
    </citation>
    <scope>NUCLEOTIDE SEQUENCE [GENOMIC DNA]</scope>
    <source>
        <tissue>Liver</tissue>
    </source>
</reference>
<reference key="2">
    <citation type="journal article" date="1993" name="Mol. Cell. Biol.">
        <title>Developmental regulation and tissue distribution of the liver transcription factor LFB1 (HNF1) in Xenopus laevis.</title>
        <authorList>
            <person name="Bartkowski S."/>
            <person name="Zapp D."/>
            <person name="Weber H."/>
            <person name="Eberle G."/>
            <person name="Zoidl C."/>
            <person name="Senkel S."/>
            <person name="Klein-Hitpass L."/>
            <person name="Ryffel G.U."/>
        </authorList>
    </citation>
    <scope>NUCLEOTIDE SEQUENCE [MRNA]</scope>
    <source>
        <tissue>Liver</tissue>
    </source>
</reference>
<reference key="3">
    <citation type="journal article" date="1996" name="Int. J. Dev. Biol.">
        <title>Regulation and function of the tissue-specific transcription factor HNF1 alpha (LFB1) during Xenopus development.</title>
        <authorList>
            <person name="Weber H."/>
            <person name="Pogge von Strandmann E."/>
            <person name="Holewa B."/>
            <person name="Bartkowski S."/>
            <person name="Zapp D."/>
            <person name="Zoidl C."/>
            <person name="Ryffel G.U."/>
        </authorList>
    </citation>
    <scope>FUNCTION</scope>
</reference>
<sequence>MASQLSYLQQELLRALLESGVTKEALKKALADGDNYAYPNVPLDDIRNLDEGDNCVQLPNGLGEPQMSEDESSDDGGDFTPPIMKELERLSPEEAAHQKAVVERLLQEDPWHVAKLVKSYLQQHNIPQREVVDTTGLNQSHLSQHLNKGTPMKTQKRAALYAWYVGKQREIARQFTHAGHSMITDDMSCDDVPNKKMRRNRFKWGPASQQILFQAYERQKNPSKEEREALVEECNRAECLQRGVSPSQAQGLGSNLVTEVRVYNWFANSGKEEAFRHKLAMDTYNGQQSSAQPLSTHDLPHGKTPRYTQDSSTDRSAAMANSQSTLSPSALEPSHILMNSDSKMVPVSGGSLPPVSTLTALHSLDHSQHTLGQTQNLIMASLPSVMTIGTDSALGPAFSNPGSSTLVIGLASQTQSVPVINSVGSSLTTLQSVQFSQQLHPSHQQPIVQQVQSHMAQSPFMATMAQLQSPHALYSHKPEVAQYTSAGFFPQTMVITDTSNLGTLTSLTPSKQVVSHHPTAHGDSPGSQLHNQDSSILHLHPSHRLSPIPTVSSASLIHYHNSSSPENHSHLLSPSHNTIDSFISTQMASSSQ</sequence>
<feature type="chain" id="PRO_0000049120" description="Hepatocyte nuclear factor 1-alpha-B">
    <location>
        <begin position="1"/>
        <end position="592"/>
    </location>
</feature>
<feature type="domain" description="HNF-p1" evidence="5">
    <location>
        <begin position="1"/>
        <end position="32"/>
    </location>
</feature>
<feature type="domain" description="POU-specific atypical" evidence="4">
    <location>
        <begin position="85"/>
        <end position="180"/>
    </location>
</feature>
<feature type="DNA-binding region" description="Homeobox; HNF1-type" evidence="3">
    <location>
        <begin position="197"/>
        <end position="277"/>
    </location>
</feature>
<feature type="region of interest" description="Dimerization" evidence="1">
    <location>
        <begin position="1"/>
        <end position="31"/>
    </location>
</feature>
<feature type="region of interest" description="Disordered" evidence="6">
    <location>
        <begin position="54"/>
        <end position="78"/>
    </location>
</feature>
<feature type="region of interest" description="Interaction with DNA" evidence="1">
    <location>
        <begin position="128"/>
        <end position="130"/>
    </location>
</feature>
<feature type="region of interest" description="Interaction with DNA" evidence="1">
    <location>
        <begin position="141"/>
        <end position="147"/>
    </location>
</feature>
<feature type="region of interest" description="Interaction with DNA" evidence="1">
    <location>
        <begin position="153"/>
        <end position="156"/>
    </location>
</feature>
<feature type="region of interest" description="Interaction with DNA" evidence="1">
    <location>
        <begin position="201"/>
        <end position="204"/>
    </location>
</feature>
<feature type="region of interest" description="Interaction with DNA" evidence="1">
    <location>
        <begin position="261"/>
        <end position="263"/>
    </location>
</feature>
<feature type="region of interest" description="Interaction with DNA" evidence="1">
    <location>
        <begin position="268"/>
        <end position="271"/>
    </location>
</feature>
<feature type="region of interest" description="Disordered" evidence="6">
    <location>
        <begin position="284"/>
        <end position="329"/>
    </location>
</feature>
<feature type="region of interest" description="Disordered" evidence="6">
    <location>
        <begin position="511"/>
        <end position="533"/>
    </location>
</feature>
<feature type="short sequence motif" description="Nuclear localization signal" evidence="2">
    <location>
        <begin position="195"/>
        <end position="203"/>
    </location>
</feature>
<feature type="compositionally biased region" description="Acidic residues" evidence="6">
    <location>
        <begin position="67"/>
        <end position="77"/>
    </location>
</feature>
<feature type="compositionally biased region" description="Polar residues" evidence="6">
    <location>
        <begin position="284"/>
        <end position="295"/>
    </location>
</feature>
<feature type="compositionally biased region" description="Polar residues" evidence="6">
    <location>
        <begin position="306"/>
        <end position="328"/>
    </location>
</feature>
<feature type="sequence conflict" description="In Ref. 2; CAA46009." evidence="8" ref="2">
    <original>P</original>
    <variation>PGF</variation>
    <location>
        <position position="305"/>
    </location>
</feature>
<feature type="sequence conflict" description="In Ref. 2; CAA46009." evidence="8" ref="2">
    <original>S</original>
    <variation>C</variation>
    <location>
        <position position="356"/>
    </location>
</feature>
<dbReference type="EMBL" id="X72983">
    <property type="protein sequence ID" value="CAA51488.1"/>
    <property type="status" value="ALT_SEQ"/>
    <property type="molecule type" value="Genomic_DNA"/>
</dbReference>
<dbReference type="EMBL" id="X72984">
    <property type="protein sequence ID" value="CAA51488.1"/>
    <property type="status" value="JOINED"/>
    <property type="molecule type" value="Genomic_DNA"/>
</dbReference>
<dbReference type="EMBL" id="X72985">
    <property type="protein sequence ID" value="CAA51488.1"/>
    <property type="status" value="JOINED"/>
    <property type="molecule type" value="Genomic_DNA"/>
</dbReference>
<dbReference type="EMBL" id="X72986">
    <property type="protein sequence ID" value="CAA51488.1"/>
    <property type="status" value="JOINED"/>
    <property type="molecule type" value="Genomic_DNA"/>
</dbReference>
<dbReference type="EMBL" id="X72987">
    <property type="protein sequence ID" value="CAA51488.1"/>
    <property type="status" value="JOINED"/>
    <property type="molecule type" value="Genomic_DNA"/>
</dbReference>
<dbReference type="EMBL" id="X72988">
    <property type="protein sequence ID" value="CAA51488.1"/>
    <property type="status" value="JOINED"/>
    <property type="molecule type" value="Genomic_DNA"/>
</dbReference>
<dbReference type="EMBL" id="X72989">
    <property type="protein sequence ID" value="CAA51488.1"/>
    <property type="status" value="JOINED"/>
    <property type="molecule type" value="Genomic_DNA"/>
</dbReference>
<dbReference type="EMBL" id="X64760">
    <property type="protein sequence ID" value="CAA46008.1"/>
    <property type="molecule type" value="mRNA"/>
</dbReference>
<dbReference type="EMBL" id="X64761">
    <property type="protein sequence ID" value="CAA46009.1"/>
    <property type="molecule type" value="mRNA"/>
</dbReference>
<dbReference type="EMBL" id="X64762">
    <property type="protein sequence ID" value="CAA46009.1"/>
    <property type="status" value="JOINED"/>
    <property type="molecule type" value="mRNA"/>
</dbReference>
<dbReference type="PIR" id="JT0766">
    <property type="entry name" value="JT0766"/>
</dbReference>
<dbReference type="SMR" id="Q91739"/>
<dbReference type="AGR" id="Xenbase:XB-GENE-6252640"/>
<dbReference type="Xenbase" id="XB-GENE-6252640">
    <property type="gene designation" value="hnf1a.L"/>
</dbReference>
<dbReference type="Proteomes" id="UP000186698">
    <property type="component" value="Unplaced"/>
</dbReference>
<dbReference type="GO" id="GO:0005634">
    <property type="term" value="C:nucleus"/>
    <property type="evidence" value="ECO:0000318"/>
    <property type="project" value="GO_Central"/>
</dbReference>
<dbReference type="GO" id="GO:0000981">
    <property type="term" value="F:DNA-binding transcription factor activity, RNA polymerase II-specific"/>
    <property type="evidence" value="ECO:0000318"/>
    <property type="project" value="GO_Central"/>
</dbReference>
<dbReference type="GO" id="GO:0000978">
    <property type="term" value="F:RNA polymerase II cis-regulatory region sequence-specific DNA binding"/>
    <property type="evidence" value="ECO:0000318"/>
    <property type="project" value="GO_Central"/>
</dbReference>
<dbReference type="GO" id="GO:0030073">
    <property type="term" value="P:insulin secretion"/>
    <property type="evidence" value="ECO:0007669"/>
    <property type="project" value="InterPro"/>
</dbReference>
<dbReference type="GO" id="GO:0001889">
    <property type="term" value="P:liver development"/>
    <property type="evidence" value="ECO:0007669"/>
    <property type="project" value="InterPro"/>
</dbReference>
<dbReference type="GO" id="GO:0031016">
    <property type="term" value="P:pancreas development"/>
    <property type="evidence" value="ECO:0007669"/>
    <property type="project" value="InterPro"/>
</dbReference>
<dbReference type="GO" id="GO:0045893">
    <property type="term" value="P:positive regulation of DNA-templated transcription"/>
    <property type="evidence" value="ECO:0007669"/>
    <property type="project" value="InterPro"/>
</dbReference>
<dbReference type="GO" id="GO:0006357">
    <property type="term" value="P:regulation of transcription by RNA polymerase II"/>
    <property type="evidence" value="ECO:0000318"/>
    <property type="project" value="GO_Central"/>
</dbReference>
<dbReference type="CDD" id="cd00086">
    <property type="entry name" value="homeodomain"/>
    <property type="match status" value="1"/>
</dbReference>
<dbReference type="FunFam" id="1.10.10.60:FF:000043">
    <property type="entry name" value="Hepatocyte nuclear factor 1-beta"/>
    <property type="match status" value="1"/>
</dbReference>
<dbReference type="FunFam" id="1.10.260.40:FF:000009">
    <property type="entry name" value="Hepatocyte nuclear factor 1-beta"/>
    <property type="match status" value="1"/>
</dbReference>
<dbReference type="Gene3D" id="1.10.10.60">
    <property type="entry name" value="Homeodomain-like"/>
    <property type="match status" value="1"/>
</dbReference>
<dbReference type="Gene3D" id="1.10.260.40">
    <property type="entry name" value="lambda repressor-like DNA-binding domains"/>
    <property type="match status" value="1"/>
</dbReference>
<dbReference type="InterPro" id="IPR001356">
    <property type="entry name" value="HD"/>
</dbReference>
<dbReference type="InterPro" id="IPR039066">
    <property type="entry name" value="HNF-1"/>
</dbReference>
<dbReference type="InterPro" id="IPR006899">
    <property type="entry name" value="HNF-1_N"/>
</dbReference>
<dbReference type="InterPro" id="IPR044869">
    <property type="entry name" value="HNF-1_POU"/>
</dbReference>
<dbReference type="InterPro" id="IPR023219">
    <property type="entry name" value="HNF1_dimer_N_dom_sf"/>
</dbReference>
<dbReference type="InterPro" id="IPR006898">
    <property type="entry name" value="HNF1a_C"/>
</dbReference>
<dbReference type="InterPro" id="IPR006897">
    <property type="entry name" value="HNF1b_C"/>
</dbReference>
<dbReference type="InterPro" id="IPR044866">
    <property type="entry name" value="HNF_P1"/>
</dbReference>
<dbReference type="InterPro" id="IPR009057">
    <property type="entry name" value="Homeodomain-like_sf"/>
</dbReference>
<dbReference type="InterPro" id="IPR010982">
    <property type="entry name" value="Lambda_DNA-bd_dom_sf"/>
</dbReference>
<dbReference type="PANTHER" id="PTHR11568">
    <property type="entry name" value="HEPATOCYTE NUCLEAR FACTOR 1"/>
    <property type="match status" value="1"/>
</dbReference>
<dbReference type="PANTHER" id="PTHR11568:SF4">
    <property type="entry name" value="HEPATOCYTE NUCLEAR FACTOR 1-ALPHA"/>
    <property type="match status" value="1"/>
</dbReference>
<dbReference type="Pfam" id="PF04814">
    <property type="entry name" value="HNF-1_N"/>
    <property type="match status" value="1"/>
</dbReference>
<dbReference type="Pfam" id="PF04813">
    <property type="entry name" value="HNF-1A_C"/>
    <property type="match status" value="1"/>
</dbReference>
<dbReference type="Pfam" id="PF04812">
    <property type="entry name" value="HNF-1B_C"/>
    <property type="match status" value="1"/>
</dbReference>
<dbReference type="SMART" id="SM00389">
    <property type="entry name" value="HOX"/>
    <property type="match status" value="1"/>
</dbReference>
<dbReference type="SUPFAM" id="SSF100957">
    <property type="entry name" value="Dimerization cofactor of HNF-1 alpha"/>
    <property type="match status" value="1"/>
</dbReference>
<dbReference type="SUPFAM" id="SSF46689">
    <property type="entry name" value="Homeodomain-like"/>
    <property type="match status" value="1"/>
</dbReference>
<dbReference type="SUPFAM" id="SSF47413">
    <property type="entry name" value="lambda repressor-like DNA-binding domains"/>
    <property type="match status" value="1"/>
</dbReference>
<dbReference type="PROSITE" id="PS51937">
    <property type="entry name" value="HNF_P1"/>
    <property type="match status" value="1"/>
</dbReference>
<dbReference type="PROSITE" id="PS00027">
    <property type="entry name" value="HOMEOBOX_1"/>
    <property type="match status" value="1"/>
</dbReference>
<dbReference type="PROSITE" id="PS50071">
    <property type="entry name" value="HOMEOBOX_2"/>
    <property type="match status" value="1"/>
</dbReference>
<dbReference type="PROSITE" id="PS51936">
    <property type="entry name" value="POU_4"/>
    <property type="match status" value="1"/>
</dbReference>
<protein>
    <recommendedName>
        <fullName>Hepatocyte nuclear factor 1-alpha-B</fullName>
        <shortName>HNF-1-alpha-B</shortName>
        <shortName>HNF-1A-B</shortName>
    </recommendedName>
    <alternativeName>
        <fullName>LFB1</fullName>
    </alternativeName>
    <alternativeName>
        <fullName>Transcription factor 1-B</fullName>
        <shortName>TCF-1-B</shortName>
    </alternativeName>
    <alternativeName>
        <fullName>XlFB1b</fullName>
    </alternativeName>
</protein>